<comment type="function">
    <text evidence="2">With S4 and S5 plays an important role in translational accuracy.</text>
</comment>
<comment type="function">
    <text evidence="2">Interacts with and stabilizes bases of the 16S rRNA that are involved in tRNA selection in the A site and with the mRNA backbone. Located at the interface of the 30S and 50S subunits, it traverses the body of the 30S subunit contacting proteins on the other side and probably holding the rRNA structure together. The combined cluster of proteins S8, S12 and S17 appears to hold together the shoulder and platform of the 30S subunit.</text>
</comment>
<comment type="subunit">
    <text evidence="2">Part of the 30S ribosomal subunit. Contacts proteins S8 and S17. May interact with IF1 in the 30S initiation complex.</text>
</comment>
<comment type="similarity">
    <text evidence="2">Belongs to the universal ribosomal protein uS12 family.</text>
</comment>
<sequence length="124" mass="13750">MPTINQLVRRPRRPRESANKAPALQHNPQKRAVCVKVYTTTPKKPNSALRKVARVRIAGYGSEVIAYIPGEGHNLQEHSVVLIRGGRVKDLPGVRYHIVRGALDAKGVQGRKKARSKYGVKRGV</sequence>
<evidence type="ECO:0000250" key="1"/>
<evidence type="ECO:0000255" key="2">
    <source>
        <dbReference type="HAMAP-Rule" id="MF_00403"/>
    </source>
</evidence>
<evidence type="ECO:0000256" key="3">
    <source>
        <dbReference type="SAM" id="MobiDB-lite"/>
    </source>
</evidence>
<evidence type="ECO:0000305" key="4"/>
<dbReference type="EMBL" id="CP001079">
    <property type="protein sequence ID" value="ACM49063.1"/>
    <property type="molecule type" value="Genomic_DNA"/>
</dbReference>
<dbReference type="RefSeq" id="WP_010263054.1">
    <property type="nucleotide sequence ID" value="NZ_AFMS01000004.1"/>
</dbReference>
<dbReference type="SMR" id="B9KHV1"/>
<dbReference type="STRING" id="320483.AMF_182"/>
<dbReference type="GeneID" id="7398638"/>
<dbReference type="KEGG" id="amf:AMF_182"/>
<dbReference type="eggNOG" id="COG0048">
    <property type="taxonomic scope" value="Bacteria"/>
</dbReference>
<dbReference type="HOGENOM" id="CLU_104295_1_2_5"/>
<dbReference type="Proteomes" id="UP000007307">
    <property type="component" value="Chromosome"/>
</dbReference>
<dbReference type="GO" id="GO:0015935">
    <property type="term" value="C:small ribosomal subunit"/>
    <property type="evidence" value="ECO:0007669"/>
    <property type="project" value="InterPro"/>
</dbReference>
<dbReference type="GO" id="GO:0019843">
    <property type="term" value="F:rRNA binding"/>
    <property type="evidence" value="ECO:0007669"/>
    <property type="project" value="UniProtKB-UniRule"/>
</dbReference>
<dbReference type="GO" id="GO:0003735">
    <property type="term" value="F:structural constituent of ribosome"/>
    <property type="evidence" value="ECO:0007669"/>
    <property type="project" value="InterPro"/>
</dbReference>
<dbReference type="GO" id="GO:0000049">
    <property type="term" value="F:tRNA binding"/>
    <property type="evidence" value="ECO:0007669"/>
    <property type="project" value="UniProtKB-UniRule"/>
</dbReference>
<dbReference type="GO" id="GO:0006412">
    <property type="term" value="P:translation"/>
    <property type="evidence" value="ECO:0007669"/>
    <property type="project" value="UniProtKB-UniRule"/>
</dbReference>
<dbReference type="CDD" id="cd03368">
    <property type="entry name" value="Ribosomal_S12"/>
    <property type="match status" value="1"/>
</dbReference>
<dbReference type="FunFam" id="2.40.50.140:FF:000001">
    <property type="entry name" value="30S ribosomal protein S12"/>
    <property type="match status" value="1"/>
</dbReference>
<dbReference type="Gene3D" id="2.40.50.140">
    <property type="entry name" value="Nucleic acid-binding proteins"/>
    <property type="match status" value="1"/>
</dbReference>
<dbReference type="HAMAP" id="MF_00403_B">
    <property type="entry name" value="Ribosomal_uS12_B"/>
    <property type="match status" value="1"/>
</dbReference>
<dbReference type="InterPro" id="IPR012340">
    <property type="entry name" value="NA-bd_OB-fold"/>
</dbReference>
<dbReference type="InterPro" id="IPR006032">
    <property type="entry name" value="Ribosomal_uS12"/>
</dbReference>
<dbReference type="InterPro" id="IPR005679">
    <property type="entry name" value="Ribosomal_uS12_bac"/>
</dbReference>
<dbReference type="NCBIfam" id="TIGR00981">
    <property type="entry name" value="rpsL_bact"/>
    <property type="match status" value="1"/>
</dbReference>
<dbReference type="PANTHER" id="PTHR11652">
    <property type="entry name" value="30S RIBOSOMAL PROTEIN S12 FAMILY MEMBER"/>
    <property type="match status" value="1"/>
</dbReference>
<dbReference type="Pfam" id="PF00164">
    <property type="entry name" value="Ribosom_S12_S23"/>
    <property type="match status" value="1"/>
</dbReference>
<dbReference type="PIRSF" id="PIRSF002133">
    <property type="entry name" value="Ribosomal_S12/S23"/>
    <property type="match status" value="1"/>
</dbReference>
<dbReference type="PRINTS" id="PR01034">
    <property type="entry name" value="RIBOSOMALS12"/>
</dbReference>
<dbReference type="SUPFAM" id="SSF50249">
    <property type="entry name" value="Nucleic acid-binding proteins"/>
    <property type="match status" value="1"/>
</dbReference>
<dbReference type="PROSITE" id="PS00055">
    <property type="entry name" value="RIBOSOMAL_S12"/>
    <property type="match status" value="1"/>
</dbReference>
<accession>B9KHV1</accession>
<feature type="chain" id="PRO_1000194117" description="Small ribosomal subunit protein uS12">
    <location>
        <begin position="1"/>
        <end position="124"/>
    </location>
</feature>
<feature type="region of interest" description="Disordered" evidence="3">
    <location>
        <begin position="1"/>
        <end position="29"/>
    </location>
</feature>
<feature type="modified residue" description="3-methylthioaspartic acid" evidence="1">
    <location>
        <position position="90"/>
    </location>
</feature>
<protein>
    <recommendedName>
        <fullName evidence="2">Small ribosomal subunit protein uS12</fullName>
    </recommendedName>
    <alternativeName>
        <fullName evidence="4">30S ribosomal protein S12</fullName>
    </alternativeName>
</protein>
<keyword id="KW-0488">Methylation</keyword>
<keyword id="KW-1185">Reference proteome</keyword>
<keyword id="KW-0687">Ribonucleoprotein</keyword>
<keyword id="KW-0689">Ribosomal protein</keyword>
<keyword id="KW-0694">RNA-binding</keyword>
<keyword id="KW-0699">rRNA-binding</keyword>
<keyword id="KW-0820">tRNA-binding</keyword>
<reference key="1">
    <citation type="journal article" date="2009" name="BMC Genomics">
        <title>Conservation in the face of diversity: multistrain analysis of an intracellular bacterium.</title>
        <authorList>
            <person name="Dark M.J."/>
            <person name="Herndon D.R."/>
            <person name="Kappmeyer L.S."/>
            <person name="Gonzales M.P."/>
            <person name="Nordeen E."/>
            <person name="Palmer G.H."/>
            <person name="Knowles D.P. Jr."/>
            <person name="Brayton K.A."/>
        </authorList>
    </citation>
    <scope>NUCLEOTIDE SEQUENCE [LARGE SCALE GENOMIC DNA]</scope>
    <source>
        <strain>Florida</strain>
    </source>
</reference>
<gene>
    <name evidence="2" type="primary">rpsL</name>
    <name type="ordered locus">AMF_182</name>
</gene>
<name>RS12_ANAMF</name>
<organism>
    <name type="scientific">Anaplasma marginale (strain Florida)</name>
    <dbReference type="NCBI Taxonomy" id="320483"/>
    <lineage>
        <taxon>Bacteria</taxon>
        <taxon>Pseudomonadati</taxon>
        <taxon>Pseudomonadota</taxon>
        <taxon>Alphaproteobacteria</taxon>
        <taxon>Rickettsiales</taxon>
        <taxon>Anaplasmataceae</taxon>
        <taxon>Anaplasma</taxon>
    </lineage>
</organism>
<proteinExistence type="inferred from homology"/>